<proteinExistence type="evidence at protein level"/>
<sequence>MAEFSQKQRKQSGSEGLGSVVDFLLANARLVLGVGGAAVLGIATLAVKRLIDRATSPPDEDDTKGDSWKELSLLRATSPQKPQPPPAAFSQPLATGSPSPSVPVEPTPIHSPTTPKFSTIAPLCLTFQERLLAFERKHVITPEAHVTLAKQLAGDIALELQAYLRSKFPELPFGALVPGGPLYDGLQAGTAEHVRLLAPLELEPGLWSLVPGVDTVAREPRCWAVRRTQLEFHPRGCSPWDRFLVGGYLSSRVLLELLRKALSASVNWPAIGSLLGCLIWPDVASEELLLKVQHECLEFTLAVLMVVPGASTDDRLLLAWPLEGLASNLWLQDLYPVETARLRALDDQDAGTRRRLLLLLCGICRGHPALVRLGWSHLTQVVLHLGEEEVAWTEEALGERFLQALEFLVGSLEQASLPCHFNPSVNLLGNFREEEIDDIGYVLYSGLQVPESLF</sequence>
<protein>
    <recommendedName>
        <fullName>Mitochondrial dynamics protein MID49</fullName>
    </recommendedName>
    <alternativeName>
        <fullName>Mitochondrial dynamics protein of 49 kDa homolog</fullName>
    </alternativeName>
    <alternativeName>
        <fullName>Mitochondrial elongation factor 2</fullName>
    </alternativeName>
    <alternativeName>
        <fullName>Smith-Magenis syndrome chromosomal region candidate gene 7 protein homolog</fullName>
    </alternativeName>
</protein>
<gene>
    <name type="primary">Mief2</name>
    <name type="synonym">Gm11</name>
    <name type="synonym">Mid49</name>
    <name type="synonym">Smcr7</name>
</gene>
<comment type="function">
    <text evidence="4 5">Mitochondrial outer membrane protein which regulates mitochondrial organization. It is required for mitochondrial fission and promotes the recruitment and association of the fission mediator dynamin-related protein 1 (DNM1L) to the mitochondrial surface independently of the mitochondrial fission FIS1 and MFF proteins. Regulates DNM1L GTPase activity.</text>
</comment>
<comment type="subunit">
    <text evidence="1">Interacts with DNM1L.</text>
</comment>
<comment type="interaction">
    <interactant intactId="EBI-16092669">
        <id>Q5NCS9</id>
    </interactant>
    <interactant intactId="EBI-16092613">
        <id>Q8K1M6-3</id>
        <label>Dnm1l</label>
    </interactant>
    <organismsDiffer>false</organismsDiffer>
    <experiments>2</experiments>
</comment>
<comment type="subcellular location">
    <subcellularLocation>
        <location evidence="5">Mitochondrion outer membrane</location>
        <topology evidence="5">Single-pass membrane protein</topology>
    </subcellularLocation>
    <text>Colocalizes with DNM1L at mitochondrial membrane. Forms foci and rings around mitochondria.</text>
</comment>
<comment type="miscellaneous">
    <text>Does not bind ADP or other nucleotides, in contrast to MIEF1.</text>
</comment>
<comment type="similarity">
    <text evidence="6">Belongs to the MID49/MID51 family.</text>
</comment>
<dbReference type="EMBL" id="AK156917">
    <property type="protein sequence ID" value="BAE33897.1"/>
    <property type="molecule type" value="mRNA"/>
</dbReference>
<dbReference type="EMBL" id="AL596215">
    <property type="status" value="NOT_ANNOTATED_CDS"/>
    <property type="molecule type" value="Genomic_DNA"/>
</dbReference>
<dbReference type="EMBL" id="BC088984">
    <property type="protein sequence ID" value="AAH88984.1"/>
    <property type="molecule type" value="mRNA"/>
</dbReference>
<dbReference type="CCDS" id="CCDS24796.1"/>
<dbReference type="RefSeq" id="NP_001009927.1">
    <property type="nucleotide sequence ID" value="NM_001009927.2"/>
</dbReference>
<dbReference type="PDB" id="4WOY">
    <property type="method" value="X-ray"/>
    <property type="resolution" value="2.40 A"/>
    <property type="chains" value="A/B=126-454"/>
</dbReference>
<dbReference type="PDBsum" id="4WOY"/>
<dbReference type="SMR" id="Q5NCS9"/>
<dbReference type="DIP" id="DIP-60661N"/>
<dbReference type="FunCoup" id="Q5NCS9">
    <property type="interactions" value="232"/>
</dbReference>
<dbReference type="IntAct" id="Q5NCS9">
    <property type="interactions" value="1"/>
</dbReference>
<dbReference type="STRING" id="10090.ENSMUSP00000018743"/>
<dbReference type="GlyGen" id="Q5NCS9">
    <property type="glycosylation" value="1 site"/>
</dbReference>
<dbReference type="iPTMnet" id="Q5NCS9"/>
<dbReference type="PhosphoSitePlus" id="Q5NCS9"/>
<dbReference type="PaxDb" id="10090-ENSMUSP00000018743"/>
<dbReference type="ProteomicsDB" id="292324"/>
<dbReference type="Antibodypedia" id="49918">
    <property type="antibodies" value="68 antibodies from 17 providers"/>
</dbReference>
<dbReference type="Ensembl" id="ENSMUST00000018743.5">
    <property type="protein sequence ID" value="ENSMUSP00000018743.5"/>
    <property type="gene ID" value="ENSMUSG00000018599.6"/>
</dbReference>
<dbReference type="GeneID" id="237781"/>
<dbReference type="KEGG" id="mmu:237781"/>
<dbReference type="UCSC" id="uc007jgj.1">
    <property type="organism name" value="mouse"/>
</dbReference>
<dbReference type="AGR" id="MGI:2144199"/>
<dbReference type="CTD" id="125170"/>
<dbReference type="MGI" id="MGI:2144199">
    <property type="gene designation" value="Mief2"/>
</dbReference>
<dbReference type="VEuPathDB" id="HostDB:ENSMUSG00000018599"/>
<dbReference type="eggNOG" id="ENOG502QPJX">
    <property type="taxonomic scope" value="Eukaryota"/>
</dbReference>
<dbReference type="GeneTree" id="ENSGT00390000013127"/>
<dbReference type="HOGENOM" id="CLU_046803_0_0_1"/>
<dbReference type="InParanoid" id="Q5NCS9"/>
<dbReference type="OMA" id="VCRGHPA"/>
<dbReference type="OrthoDB" id="5964386at2759"/>
<dbReference type="PhylomeDB" id="Q5NCS9"/>
<dbReference type="TreeFam" id="TF331032"/>
<dbReference type="BioGRID-ORCS" id="237781">
    <property type="hits" value="0 hits in 76 CRISPR screens"/>
</dbReference>
<dbReference type="ChiTaRS" id="Mief2">
    <property type="organism name" value="mouse"/>
</dbReference>
<dbReference type="EvolutionaryTrace" id="Q5NCS9"/>
<dbReference type="PRO" id="PR:Q5NCS9"/>
<dbReference type="Proteomes" id="UP000000589">
    <property type="component" value="Chromosome 11"/>
</dbReference>
<dbReference type="RNAct" id="Q5NCS9">
    <property type="molecule type" value="protein"/>
</dbReference>
<dbReference type="Bgee" id="ENSMUSG00000018599">
    <property type="expression patterns" value="Expressed in knee joint and 192 other cell types or tissues"/>
</dbReference>
<dbReference type="GO" id="GO:0005741">
    <property type="term" value="C:mitochondrial outer membrane"/>
    <property type="evidence" value="ECO:0000250"/>
    <property type="project" value="UniProtKB"/>
</dbReference>
<dbReference type="GO" id="GO:0005739">
    <property type="term" value="C:mitochondrion"/>
    <property type="evidence" value="ECO:0000250"/>
    <property type="project" value="UniProtKB"/>
</dbReference>
<dbReference type="GO" id="GO:0007005">
    <property type="term" value="P:mitochondrion organization"/>
    <property type="evidence" value="ECO:0000250"/>
    <property type="project" value="UniProtKB"/>
</dbReference>
<dbReference type="GO" id="GO:0090141">
    <property type="term" value="P:positive regulation of mitochondrial fission"/>
    <property type="evidence" value="ECO:0000315"/>
    <property type="project" value="UniProtKB"/>
</dbReference>
<dbReference type="GO" id="GO:0090314">
    <property type="term" value="P:positive regulation of protein targeting to membrane"/>
    <property type="evidence" value="ECO:0000250"/>
    <property type="project" value="UniProtKB"/>
</dbReference>
<dbReference type="GO" id="GO:0010821">
    <property type="term" value="P:regulation of mitochondrion organization"/>
    <property type="evidence" value="ECO:0000250"/>
    <property type="project" value="UniProtKB"/>
</dbReference>
<dbReference type="FunFam" id="1.10.1410.40:FF:000003">
    <property type="entry name" value="Mitochondrial dynamics protein MID51"/>
    <property type="match status" value="1"/>
</dbReference>
<dbReference type="FunFam" id="3.30.460.90:FF:000004">
    <property type="entry name" value="Mitochondrial elongation factor 2"/>
    <property type="match status" value="1"/>
</dbReference>
<dbReference type="Gene3D" id="1.10.1410.40">
    <property type="match status" value="1"/>
</dbReference>
<dbReference type="Gene3D" id="3.30.460.90">
    <property type="match status" value="1"/>
</dbReference>
<dbReference type="InterPro" id="IPR046906">
    <property type="entry name" value="Mab-21_HhH/H2TH-like"/>
</dbReference>
<dbReference type="InterPro" id="IPR024810">
    <property type="entry name" value="MAB21L/cGLR"/>
</dbReference>
<dbReference type="InterPro" id="IPR045909">
    <property type="entry name" value="MID49/MID51"/>
</dbReference>
<dbReference type="InterPro" id="IPR049097">
    <property type="entry name" value="MID51-like_C"/>
</dbReference>
<dbReference type="PANTHER" id="PTHR16451:SF11">
    <property type="entry name" value="MITOCHONDRIAL DYNAMICS PROTEIN MID49"/>
    <property type="match status" value="1"/>
</dbReference>
<dbReference type="PANTHER" id="PTHR16451">
    <property type="entry name" value="MITOCHONDRIAL DYNAMICS PROTEINS 49/51 FAMILY MEMBER"/>
    <property type="match status" value="1"/>
</dbReference>
<dbReference type="Pfam" id="PF20266">
    <property type="entry name" value="Mab-21_C"/>
    <property type="match status" value="1"/>
</dbReference>
<dbReference type="Pfam" id="PF21297">
    <property type="entry name" value="MID51-like_C"/>
    <property type="match status" value="1"/>
</dbReference>
<dbReference type="SMART" id="SM01265">
    <property type="entry name" value="Mab-21"/>
    <property type="match status" value="1"/>
</dbReference>
<accession>Q5NCS9</accession>
<keyword id="KW-0002">3D-structure</keyword>
<keyword id="KW-0472">Membrane</keyword>
<keyword id="KW-0496">Mitochondrion</keyword>
<keyword id="KW-1000">Mitochondrion outer membrane</keyword>
<keyword id="KW-1185">Reference proteome</keyword>
<keyword id="KW-0812">Transmembrane</keyword>
<keyword id="KW-1133">Transmembrane helix</keyword>
<evidence type="ECO:0000250" key="1"/>
<evidence type="ECO:0000255" key="2"/>
<evidence type="ECO:0000256" key="3">
    <source>
        <dbReference type="SAM" id="MobiDB-lite"/>
    </source>
</evidence>
<evidence type="ECO:0000269" key="4">
    <source>
    </source>
</evidence>
<evidence type="ECO:0000269" key="5">
    <source>
    </source>
</evidence>
<evidence type="ECO:0000305" key="6"/>
<evidence type="ECO:0007829" key="7">
    <source>
        <dbReference type="PDB" id="4WOY"/>
    </source>
</evidence>
<name>MID49_MOUSE</name>
<organism>
    <name type="scientific">Mus musculus</name>
    <name type="common">Mouse</name>
    <dbReference type="NCBI Taxonomy" id="10090"/>
    <lineage>
        <taxon>Eukaryota</taxon>
        <taxon>Metazoa</taxon>
        <taxon>Chordata</taxon>
        <taxon>Craniata</taxon>
        <taxon>Vertebrata</taxon>
        <taxon>Euteleostomi</taxon>
        <taxon>Mammalia</taxon>
        <taxon>Eutheria</taxon>
        <taxon>Euarchontoglires</taxon>
        <taxon>Glires</taxon>
        <taxon>Rodentia</taxon>
        <taxon>Myomorpha</taxon>
        <taxon>Muroidea</taxon>
        <taxon>Muridae</taxon>
        <taxon>Murinae</taxon>
        <taxon>Mus</taxon>
        <taxon>Mus</taxon>
    </lineage>
</organism>
<reference key="1">
    <citation type="journal article" date="2005" name="Science">
        <title>The transcriptional landscape of the mammalian genome.</title>
        <authorList>
            <person name="Carninci P."/>
            <person name="Kasukawa T."/>
            <person name="Katayama S."/>
            <person name="Gough J."/>
            <person name="Frith M.C."/>
            <person name="Maeda N."/>
            <person name="Oyama R."/>
            <person name="Ravasi T."/>
            <person name="Lenhard B."/>
            <person name="Wells C."/>
            <person name="Kodzius R."/>
            <person name="Shimokawa K."/>
            <person name="Bajic V.B."/>
            <person name="Brenner S.E."/>
            <person name="Batalov S."/>
            <person name="Forrest A.R."/>
            <person name="Zavolan M."/>
            <person name="Davis M.J."/>
            <person name="Wilming L.G."/>
            <person name="Aidinis V."/>
            <person name="Allen J.E."/>
            <person name="Ambesi-Impiombato A."/>
            <person name="Apweiler R."/>
            <person name="Aturaliya R.N."/>
            <person name="Bailey T.L."/>
            <person name="Bansal M."/>
            <person name="Baxter L."/>
            <person name="Beisel K.W."/>
            <person name="Bersano T."/>
            <person name="Bono H."/>
            <person name="Chalk A.M."/>
            <person name="Chiu K.P."/>
            <person name="Choudhary V."/>
            <person name="Christoffels A."/>
            <person name="Clutterbuck D.R."/>
            <person name="Crowe M.L."/>
            <person name="Dalla E."/>
            <person name="Dalrymple B.P."/>
            <person name="de Bono B."/>
            <person name="Della Gatta G."/>
            <person name="di Bernardo D."/>
            <person name="Down T."/>
            <person name="Engstrom P."/>
            <person name="Fagiolini M."/>
            <person name="Faulkner G."/>
            <person name="Fletcher C.F."/>
            <person name="Fukushima T."/>
            <person name="Furuno M."/>
            <person name="Futaki S."/>
            <person name="Gariboldi M."/>
            <person name="Georgii-Hemming P."/>
            <person name="Gingeras T.R."/>
            <person name="Gojobori T."/>
            <person name="Green R.E."/>
            <person name="Gustincich S."/>
            <person name="Harbers M."/>
            <person name="Hayashi Y."/>
            <person name="Hensch T.K."/>
            <person name="Hirokawa N."/>
            <person name="Hill D."/>
            <person name="Huminiecki L."/>
            <person name="Iacono M."/>
            <person name="Ikeo K."/>
            <person name="Iwama A."/>
            <person name="Ishikawa T."/>
            <person name="Jakt M."/>
            <person name="Kanapin A."/>
            <person name="Katoh M."/>
            <person name="Kawasawa Y."/>
            <person name="Kelso J."/>
            <person name="Kitamura H."/>
            <person name="Kitano H."/>
            <person name="Kollias G."/>
            <person name="Krishnan S.P."/>
            <person name="Kruger A."/>
            <person name="Kummerfeld S.K."/>
            <person name="Kurochkin I.V."/>
            <person name="Lareau L.F."/>
            <person name="Lazarevic D."/>
            <person name="Lipovich L."/>
            <person name="Liu J."/>
            <person name="Liuni S."/>
            <person name="McWilliam S."/>
            <person name="Madan Babu M."/>
            <person name="Madera M."/>
            <person name="Marchionni L."/>
            <person name="Matsuda H."/>
            <person name="Matsuzawa S."/>
            <person name="Miki H."/>
            <person name="Mignone F."/>
            <person name="Miyake S."/>
            <person name="Morris K."/>
            <person name="Mottagui-Tabar S."/>
            <person name="Mulder N."/>
            <person name="Nakano N."/>
            <person name="Nakauchi H."/>
            <person name="Ng P."/>
            <person name="Nilsson R."/>
            <person name="Nishiguchi S."/>
            <person name="Nishikawa S."/>
            <person name="Nori F."/>
            <person name="Ohara O."/>
            <person name="Okazaki Y."/>
            <person name="Orlando V."/>
            <person name="Pang K.C."/>
            <person name="Pavan W.J."/>
            <person name="Pavesi G."/>
            <person name="Pesole G."/>
            <person name="Petrovsky N."/>
            <person name="Piazza S."/>
            <person name="Reed J."/>
            <person name="Reid J.F."/>
            <person name="Ring B.Z."/>
            <person name="Ringwald M."/>
            <person name="Rost B."/>
            <person name="Ruan Y."/>
            <person name="Salzberg S.L."/>
            <person name="Sandelin A."/>
            <person name="Schneider C."/>
            <person name="Schoenbach C."/>
            <person name="Sekiguchi K."/>
            <person name="Semple C.A."/>
            <person name="Seno S."/>
            <person name="Sessa L."/>
            <person name="Sheng Y."/>
            <person name="Shibata Y."/>
            <person name="Shimada H."/>
            <person name="Shimada K."/>
            <person name="Silva D."/>
            <person name="Sinclair B."/>
            <person name="Sperling S."/>
            <person name="Stupka E."/>
            <person name="Sugiura K."/>
            <person name="Sultana R."/>
            <person name="Takenaka Y."/>
            <person name="Taki K."/>
            <person name="Tammoja K."/>
            <person name="Tan S.L."/>
            <person name="Tang S."/>
            <person name="Taylor M.S."/>
            <person name="Tegner J."/>
            <person name="Teichmann S.A."/>
            <person name="Ueda H.R."/>
            <person name="van Nimwegen E."/>
            <person name="Verardo R."/>
            <person name="Wei C.L."/>
            <person name="Yagi K."/>
            <person name="Yamanishi H."/>
            <person name="Zabarovsky E."/>
            <person name="Zhu S."/>
            <person name="Zimmer A."/>
            <person name="Hide W."/>
            <person name="Bult C."/>
            <person name="Grimmond S.M."/>
            <person name="Teasdale R.D."/>
            <person name="Liu E.T."/>
            <person name="Brusic V."/>
            <person name="Quackenbush J."/>
            <person name="Wahlestedt C."/>
            <person name="Mattick J.S."/>
            <person name="Hume D.A."/>
            <person name="Kai C."/>
            <person name="Sasaki D."/>
            <person name="Tomaru Y."/>
            <person name="Fukuda S."/>
            <person name="Kanamori-Katayama M."/>
            <person name="Suzuki M."/>
            <person name="Aoki J."/>
            <person name="Arakawa T."/>
            <person name="Iida J."/>
            <person name="Imamura K."/>
            <person name="Itoh M."/>
            <person name="Kato T."/>
            <person name="Kawaji H."/>
            <person name="Kawagashira N."/>
            <person name="Kawashima T."/>
            <person name="Kojima M."/>
            <person name="Kondo S."/>
            <person name="Konno H."/>
            <person name="Nakano K."/>
            <person name="Ninomiya N."/>
            <person name="Nishio T."/>
            <person name="Okada M."/>
            <person name="Plessy C."/>
            <person name="Shibata K."/>
            <person name="Shiraki T."/>
            <person name="Suzuki S."/>
            <person name="Tagami M."/>
            <person name="Waki K."/>
            <person name="Watahiki A."/>
            <person name="Okamura-Oho Y."/>
            <person name="Suzuki H."/>
            <person name="Kawai J."/>
            <person name="Hayashizaki Y."/>
        </authorList>
    </citation>
    <scope>NUCLEOTIDE SEQUENCE [LARGE SCALE MRNA]</scope>
    <source>
        <strain>NOD</strain>
        <tissue>Spleen</tissue>
    </source>
</reference>
<reference key="2">
    <citation type="journal article" date="2009" name="PLoS Biol.">
        <title>Lineage-specific biology revealed by a finished genome assembly of the mouse.</title>
        <authorList>
            <person name="Church D.M."/>
            <person name="Goodstadt L."/>
            <person name="Hillier L.W."/>
            <person name="Zody M.C."/>
            <person name="Goldstein S."/>
            <person name="She X."/>
            <person name="Bult C.J."/>
            <person name="Agarwala R."/>
            <person name="Cherry J.L."/>
            <person name="DiCuccio M."/>
            <person name="Hlavina W."/>
            <person name="Kapustin Y."/>
            <person name="Meric P."/>
            <person name="Maglott D."/>
            <person name="Birtle Z."/>
            <person name="Marques A.C."/>
            <person name="Graves T."/>
            <person name="Zhou S."/>
            <person name="Teague B."/>
            <person name="Potamousis K."/>
            <person name="Churas C."/>
            <person name="Place M."/>
            <person name="Herschleb J."/>
            <person name="Runnheim R."/>
            <person name="Forrest D."/>
            <person name="Amos-Landgraf J."/>
            <person name="Schwartz D.C."/>
            <person name="Cheng Z."/>
            <person name="Lindblad-Toh K."/>
            <person name="Eichler E.E."/>
            <person name="Ponting C.P."/>
        </authorList>
    </citation>
    <scope>NUCLEOTIDE SEQUENCE [LARGE SCALE GENOMIC DNA]</scope>
    <source>
        <strain>C57BL/6J</strain>
    </source>
</reference>
<reference key="3">
    <citation type="journal article" date="2004" name="Genome Res.">
        <title>The status, quality, and expansion of the NIH full-length cDNA project: the Mammalian Gene Collection (MGC).</title>
        <authorList>
            <consortium name="The MGC Project Team"/>
        </authorList>
    </citation>
    <scope>NUCLEOTIDE SEQUENCE [LARGE SCALE MRNA]</scope>
    <source>
        <strain>C57BL/6J</strain>
        <tissue>Brain</tissue>
    </source>
</reference>
<reference key="4">
    <citation type="journal article" date="2013" name="Mol. Biol. Cell">
        <title>Fis1, Mff, MiD49, and MiD51 mediate Drp1 recruitment in mitochondrial fission.</title>
        <authorList>
            <person name="Loson O.C."/>
            <person name="Song Z."/>
            <person name="Chen H."/>
            <person name="Chan D.C."/>
        </authorList>
    </citation>
    <scope>FUNCTION</scope>
</reference>
<reference key="5">
    <citation type="journal article" date="2014" name="Structure">
        <title>The mitochondrial fission receptor Mid51 requires ADP as a cofactor.</title>
        <authorList>
            <person name="Loson O.C."/>
            <person name="Liu R."/>
            <person name="Rome M.E."/>
            <person name="Meng S."/>
            <person name="Kaiser J.T."/>
            <person name="Shan S.O."/>
            <person name="Chan D.C."/>
        </authorList>
    </citation>
    <scope>LACK OF NUCLEOTIDE-BINDING</scope>
    <scope>FUNCTION</scope>
    <scope>SUBCELLULAR LOCATION</scope>
</reference>
<feature type="chain" id="PRO_0000310446" description="Mitochondrial dynamics protein MID49">
    <location>
        <begin position="1"/>
        <end position="454"/>
    </location>
</feature>
<feature type="topological domain" description="Mitochondrial intermembrane" evidence="2">
    <location>
        <begin position="1"/>
        <end position="22"/>
    </location>
</feature>
<feature type="transmembrane region" description="Helical" evidence="2">
    <location>
        <begin position="23"/>
        <end position="43"/>
    </location>
</feature>
<feature type="topological domain" description="Cytoplasmic" evidence="2">
    <location>
        <begin position="44"/>
        <end position="454"/>
    </location>
</feature>
<feature type="region of interest" description="Disordered" evidence="3">
    <location>
        <begin position="76"/>
        <end position="113"/>
    </location>
</feature>
<feature type="helix" evidence="7">
    <location>
        <begin position="127"/>
        <end position="138"/>
    </location>
</feature>
<feature type="helix" evidence="7">
    <location>
        <begin position="143"/>
        <end position="167"/>
    </location>
</feature>
<feature type="strand" evidence="7">
    <location>
        <begin position="177"/>
        <end position="180"/>
    </location>
</feature>
<feature type="turn" evidence="7">
    <location>
        <begin position="181"/>
        <end position="183"/>
    </location>
</feature>
<feature type="strand" evidence="7">
    <location>
        <begin position="194"/>
        <end position="200"/>
    </location>
</feature>
<feature type="strand" evidence="7">
    <location>
        <begin position="206"/>
        <end position="211"/>
    </location>
</feature>
<feature type="helix" evidence="7">
    <location>
        <begin position="212"/>
        <end position="214"/>
    </location>
</feature>
<feature type="strand" evidence="7">
    <location>
        <begin position="215"/>
        <end position="217"/>
    </location>
</feature>
<feature type="strand" evidence="7">
    <location>
        <begin position="222"/>
        <end position="227"/>
    </location>
</feature>
<feature type="turn" evidence="7">
    <location>
        <begin position="230"/>
        <end position="232"/>
    </location>
</feature>
<feature type="helix" evidence="7">
    <location>
        <begin position="239"/>
        <end position="243"/>
    </location>
</feature>
<feature type="helix" evidence="7">
    <location>
        <begin position="251"/>
        <end position="264"/>
    </location>
</feature>
<feature type="helix" evidence="7">
    <location>
        <begin position="268"/>
        <end position="275"/>
    </location>
</feature>
<feature type="strand" evidence="7">
    <location>
        <begin position="277"/>
        <end position="281"/>
    </location>
</feature>
<feature type="strand" evidence="7">
    <location>
        <begin position="287"/>
        <end position="291"/>
    </location>
</feature>
<feature type="turn" evidence="7">
    <location>
        <begin position="294"/>
        <end position="296"/>
    </location>
</feature>
<feature type="strand" evidence="7">
    <location>
        <begin position="298"/>
        <end position="307"/>
    </location>
</feature>
<feature type="strand" evidence="7">
    <location>
        <begin position="311"/>
        <end position="313"/>
    </location>
</feature>
<feature type="strand" evidence="7">
    <location>
        <begin position="316"/>
        <end position="318"/>
    </location>
</feature>
<feature type="strand" evidence="7">
    <location>
        <begin position="329"/>
        <end position="333"/>
    </location>
</feature>
<feature type="helix" evidence="7">
    <location>
        <begin position="335"/>
        <end position="349"/>
    </location>
</feature>
<feature type="helix" evidence="7">
    <location>
        <begin position="353"/>
        <end position="366"/>
    </location>
</feature>
<feature type="turn" evidence="7">
    <location>
        <begin position="368"/>
        <end position="372"/>
    </location>
</feature>
<feature type="helix" evidence="7">
    <location>
        <begin position="375"/>
        <end position="386"/>
    </location>
</feature>
<feature type="strand" evidence="7">
    <location>
        <begin position="387"/>
        <end position="390"/>
    </location>
</feature>
<feature type="helix" evidence="7">
    <location>
        <begin position="394"/>
        <end position="396"/>
    </location>
</feature>
<feature type="helix" evidence="7">
    <location>
        <begin position="397"/>
        <end position="413"/>
    </location>
</feature>
<feature type="strand" evidence="7">
    <location>
        <begin position="422"/>
        <end position="426"/>
    </location>
</feature>
<feature type="turn" evidence="7">
    <location>
        <begin position="427"/>
        <end position="430"/>
    </location>
</feature>
<feature type="helix" evidence="7">
    <location>
        <begin position="433"/>
        <end position="442"/>
    </location>
</feature>
<feature type="helix" evidence="7">
    <location>
        <begin position="443"/>
        <end position="445"/>
    </location>
</feature>
<feature type="turn" evidence="7">
    <location>
        <begin position="446"/>
        <end position="448"/>
    </location>
</feature>
<feature type="helix" evidence="7">
    <location>
        <begin position="450"/>
        <end position="452"/>
    </location>
</feature>